<sequence>MPLPCIPPPPVSRDTAACIAWLGLAHASCVDTLRFIKHHDLKITPEAEYILASLREWLYFAFLTERQRCKQKGRGAITSGRTWFCFFKYEDARKSVVYDAARQTVSLQIGTIQQVPTTAL</sequence>
<reference key="1">
    <citation type="journal article" date="1994" name="J. Virol.">
        <title>Nucleotide sequence of human adenovirus type 12 DNA: comparative functional analysis.</title>
        <authorList>
            <person name="Sprengel J."/>
            <person name="Schmitz B."/>
            <person name="Heuss-Neitzel D."/>
            <person name="Zock C."/>
            <person name="Doerfler W."/>
        </authorList>
    </citation>
    <scope>NUCLEOTIDE SEQUENCE [LARGE SCALE GENOMIC DNA]</scope>
</reference>
<reference key="2">
    <citation type="journal article" date="1990" name="Nucleic Acids Res.">
        <title>Nucleotide sequence of the right 10% of adenovirus type 12 DNA encoding the entire region E4.</title>
        <authorList>
            <person name="Hogenkamp T."/>
            <person name="Esche H."/>
        </authorList>
    </citation>
    <scope>NUCLEOTIDE SEQUENCE [GENOMIC DNA]</scope>
</reference>
<organism>
    <name type="scientific">Human adenovirus A serotype 12</name>
    <name type="common">HAdV-12</name>
    <name type="synonym">Human adenovirus 12</name>
    <dbReference type="NCBI Taxonomy" id="28282"/>
    <lineage>
        <taxon>Viruses</taxon>
        <taxon>Varidnaviria</taxon>
        <taxon>Bamfordvirae</taxon>
        <taxon>Preplasmiviricota</taxon>
        <taxon>Tectiliviricetes</taxon>
        <taxon>Rowavirales</taxon>
        <taxon>Adenoviridae</taxon>
        <taxon>Mastadenovirus</taxon>
        <taxon>Human mastadenovirus A</taxon>
    </lineage>
</organism>
<accession>P36709</accession>
<feature type="chain" id="PRO_0000221774" description="Probable early E4 13 kDa protein">
    <location>
        <begin position="1"/>
        <end position="120"/>
    </location>
</feature>
<protein>
    <recommendedName>
        <fullName>Probable early E4 13 kDa protein</fullName>
    </recommendedName>
</protein>
<dbReference type="EMBL" id="X73487">
    <property type="protein sequence ID" value="CAA51902.1"/>
    <property type="molecule type" value="Genomic_DNA"/>
</dbReference>
<dbReference type="EMBL" id="X51800">
    <property type="protein sequence ID" value="CAB57853.1"/>
    <property type="molecule type" value="Genomic_DNA"/>
</dbReference>
<dbReference type="PIR" id="S10865">
    <property type="entry name" value="S10865"/>
</dbReference>
<dbReference type="RefSeq" id="NP_040935.1">
    <property type="nucleotide sequence ID" value="NC_001460.1"/>
</dbReference>
<dbReference type="DIP" id="DIP-41950N"/>
<dbReference type="IntAct" id="P36709">
    <property type="interactions" value="2"/>
</dbReference>
<dbReference type="MINT" id="P36709"/>
<dbReference type="DNASU" id="1460865"/>
<dbReference type="GeneID" id="1460865"/>
<dbReference type="Proteomes" id="UP000004993">
    <property type="component" value="Genome"/>
</dbReference>
<dbReference type="GO" id="GO:0039593">
    <property type="term" value="P:symbiont-mediated perturbation of host exit from mitosis"/>
    <property type="evidence" value="ECO:0007669"/>
    <property type="project" value="UniProtKB-KW"/>
</dbReference>
<dbReference type="InterPro" id="IPR008680">
    <property type="entry name" value="M_adenovirusE4"/>
</dbReference>
<dbReference type="Pfam" id="PF05385">
    <property type="entry name" value="Adeno_E4"/>
    <property type="match status" value="1"/>
</dbReference>
<proteinExistence type="predicted"/>
<name>E413_ADE12</name>
<keyword id="KW-0244">Early protein</keyword>
<keyword id="KW-0945">Host-virus interaction</keyword>
<keyword id="KW-1098">Inhibition of host mitotic exit by virus</keyword>
<keyword id="KW-1121">Modulation of host cell cycle by virus</keyword>
<keyword id="KW-1185">Reference proteome</keyword>
<organismHost>
    <name type="scientific">Homo sapiens</name>
    <name type="common">Human</name>
    <dbReference type="NCBI Taxonomy" id="9606"/>
</organismHost>